<proteinExistence type="inferred from homology"/>
<comment type="function">
    <text evidence="1">Cell division factor that enhances FtsZ-ring assembly. Directly interacts with FtsZ and promotes bundling of FtsZ protofilaments, with a reduction in FtsZ GTPase activity.</text>
</comment>
<comment type="subunit">
    <text evidence="1">Interacts with FtsZ.</text>
</comment>
<comment type="subcellular location">
    <subcellularLocation>
        <location evidence="1">Cytoplasm</location>
    </subcellularLocation>
    <text evidence="1">Localizes to mid-cell in an FtsZ-dependent manner.</text>
</comment>
<comment type="similarity">
    <text evidence="1">Belongs to the ZapD family.</text>
</comment>
<gene>
    <name evidence="1" type="primary">zapD</name>
    <name type="ordered locus">KPK_4636</name>
</gene>
<sequence>MHTPVLFEHPLNEKMRTWLRIEFLIQQMAFHPMIATHADALHFFRNAGDLLDVLERGEVRTDLVKELERQQRKLQSWAEVPGVDQERINELRQQLKQSSSTLMAAPRIGQFLREDRLIALVRQRLSIPGGCCSFDLPTLHIWLHMPQAHRDEQVASWLASLDPLIQSLNLILDLIRNSALFRKQTSLNGFYQDNGEDADLLRLRLDLAHQLYPQISGHKSRFAIRFLPLDSEYGIVPERFDFELACC</sequence>
<dbReference type="EMBL" id="CP000964">
    <property type="protein sequence ID" value="ACI09263.1"/>
    <property type="molecule type" value="Genomic_DNA"/>
</dbReference>
<dbReference type="SMR" id="B5Y1T6"/>
<dbReference type="KEGG" id="kpe:KPK_4636"/>
<dbReference type="HOGENOM" id="CLU_076303_0_0_6"/>
<dbReference type="Proteomes" id="UP000001734">
    <property type="component" value="Chromosome"/>
</dbReference>
<dbReference type="GO" id="GO:0032153">
    <property type="term" value="C:cell division site"/>
    <property type="evidence" value="ECO:0007669"/>
    <property type="project" value="TreeGrafter"/>
</dbReference>
<dbReference type="GO" id="GO:0005737">
    <property type="term" value="C:cytoplasm"/>
    <property type="evidence" value="ECO:0007669"/>
    <property type="project" value="UniProtKB-SubCell"/>
</dbReference>
<dbReference type="GO" id="GO:0000917">
    <property type="term" value="P:division septum assembly"/>
    <property type="evidence" value="ECO:0007669"/>
    <property type="project" value="UniProtKB-KW"/>
</dbReference>
<dbReference type="GO" id="GO:0043093">
    <property type="term" value="P:FtsZ-dependent cytokinesis"/>
    <property type="evidence" value="ECO:0007669"/>
    <property type="project" value="UniProtKB-UniRule"/>
</dbReference>
<dbReference type="FunFam" id="1.10.3900.10:FF:000001">
    <property type="entry name" value="Cell division protein ZapD"/>
    <property type="match status" value="1"/>
</dbReference>
<dbReference type="FunFam" id="2.60.440.10:FF:000001">
    <property type="entry name" value="Cell division protein ZapD"/>
    <property type="match status" value="1"/>
</dbReference>
<dbReference type="Gene3D" id="1.10.3900.10">
    <property type="entry name" value="YacF-like"/>
    <property type="match status" value="1"/>
</dbReference>
<dbReference type="Gene3D" id="2.60.440.10">
    <property type="entry name" value="YacF-like domains"/>
    <property type="match status" value="1"/>
</dbReference>
<dbReference type="HAMAP" id="MF_01092">
    <property type="entry name" value="ZapD"/>
    <property type="match status" value="1"/>
</dbReference>
<dbReference type="InterPro" id="IPR009777">
    <property type="entry name" value="ZapD"/>
</dbReference>
<dbReference type="InterPro" id="IPR027462">
    <property type="entry name" value="ZapD_C"/>
</dbReference>
<dbReference type="InterPro" id="IPR036268">
    <property type="entry name" value="ZapD_sf"/>
</dbReference>
<dbReference type="NCBIfam" id="NF003653">
    <property type="entry name" value="PRK05287.1-1"/>
    <property type="match status" value="1"/>
</dbReference>
<dbReference type="NCBIfam" id="NF003655">
    <property type="entry name" value="PRK05287.1-3"/>
    <property type="match status" value="1"/>
</dbReference>
<dbReference type="PANTHER" id="PTHR39455">
    <property type="entry name" value="CELL DIVISION PROTEIN ZAPD"/>
    <property type="match status" value="1"/>
</dbReference>
<dbReference type="PANTHER" id="PTHR39455:SF1">
    <property type="entry name" value="CELL DIVISION PROTEIN ZAPD"/>
    <property type="match status" value="1"/>
</dbReference>
<dbReference type="Pfam" id="PF07072">
    <property type="entry name" value="ZapD"/>
    <property type="match status" value="1"/>
</dbReference>
<dbReference type="SUPFAM" id="SSF160950">
    <property type="entry name" value="YacF-like"/>
    <property type="match status" value="1"/>
</dbReference>
<reference key="1">
    <citation type="journal article" date="2008" name="PLoS Genet.">
        <title>Complete genome sequence of the N2-fixing broad host range endophyte Klebsiella pneumoniae 342 and virulence predictions verified in mice.</title>
        <authorList>
            <person name="Fouts D.E."/>
            <person name="Tyler H.L."/>
            <person name="DeBoy R.T."/>
            <person name="Daugherty S."/>
            <person name="Ren Q."/>
            <person name="Badger J.H."/>
            <person name="Durkin A.S."/>
            <person name="Huot H."/>
            <person name="Shrivastava S."/>
            <person name="Kothari S."/>
            <person name="Dodson R.J."/>
            <person name="Mohamoud Y."/>
            <person name="Khouri H."/>
            <person name="Roesch L.F.W."/>
            <person name="Krogfelt K.A."/>
            <person name="Struve C."/>
            <person name="Triplett E.W."/>
            <person name="Methe B.A."/>
        </authorList>
    </citation>
    <scope>NUCLEOTIDE SEQUENCE [LARGE SCALE GENOMIC DNA]</scope>
    <source>
        <strain>342</strain>
    </source>
</reference>
<protein>
    <recommendedName>
        <fullName evidence="1">Cell division protein ZapD</fullName>
    </recommendedName>
    <alternativeName>
        <fullName evidence="1">Z ring-associated protein D</fullName>
    </alternativeName>
</protein>
<accession>B5Y1T6</accession>
<evidence type="ECO:0000255" key="1">
    <source>
        <dbReference type="HAMAP-Rule" id="MF_01092"/>
    </source>
</evidence>
<organism>
    <name type="scientific">Klebsiella pneumoniae (strain 342)</name>
    <dbReference type="NCBI Taxonomy" id="507522"/>
    <lineage>
        <taxon>Bacteria</taxon>
        <taxon>Pseudomonadati</taxon>
        <taxon>Pseudomonadota</taxon>
        <taxon>Gammaproteobacteria</taxon>
        <taxon>Enterobacterales</taxon>
        <taxon>Enterobacteriaceae</taxon>
        <taxon>Klebsiella/Raoultella group</taxon>
        <taxon>Klebsiella</taxon>
        <taxon>Klebsiella pneumoniae complex</taxon>
    </lineage>
</organism>
<name>ZAPD_KLEP3</name>
<keyword id="KW-0131">Cell cycle</keyword>
<keyword id="KW-0132">Cell division</keyword>
<keyword id="KW-0963">Cytoplasm</keyword>
<keyword id="KW-0717">Septation</keyword>
<feature type="chain" id="PRO_1000136945" description="Cell division protein ZapD">
    <location>
        <begin position="1"/>
        <end position="247"/>
    </location>
</feature>